<keyword id="KW-0030">Aminoacyl-tRNA synthetase</keyword>
<keyword id="KW-0067">ATP-binding</keyword>
<keyword id="KW-0963">Cytoplasm</keyword>
<keyword id="KW-0436">Ligase</keyword>
<keyword id="KW-0479">Metal-binding</keyword>
<keyword id="KW-0547">Nucleotide-binding</keyword>
<keyword id="KW-0648">Protein biosynthesis</keyword>
<keyword id="KW-0862">Zinc</keyword>
<feature type="chain" id="PRO_1000001905" description="Glutamate--tRNA ligase">
    <location>
        <begin position="1"/>
        <end position="468"/>
    </location>
</feature>
<feature type="short sequence motif" description="'HIGH' region" evidence="1">
    <location>
        <begin position="8"/>
        <end position="18"/>
    </location>
</feature>
<feature type="short sequence motif" description="'KMSKS' region" evidence="1">
    <location>
        <begin position="236"/>
        <end position="240"/>
    </location>
</feature>
<feature type="binding site" evidence="1">
    <location>
        <position position="97"/>
    </location>
    <ligand>
        <name>Zn(2+)</name>
        <dbReference type="ChEBI" id="CHEBI:29105"/>
    </ligand>
</feature>
<feature type="binding site" evidence="1">
    <location>
        <position position="99"/>
    </location>
    <ligand>
        <name>Zn(2+)</name>
        <dbReference type="ChEBI" id="CHEBI:29105"/>
    </ligand>
</feature>
<feature type="binding site" evidence="1">
    <location>
        <position position="124"/>
    </location>
    <ligand>
        <name>Zn(2+)</name>
        <dbReference type="ChEBI" id="CHEBI:29105"/>
    </ligand>
</feature>
<feature type="binding site" evidence="1">
    <location>
        <position position="126"/>
    </location>
    <ligand>
        <name>Zn(2+)</name>
        <dbReference type="ChEBI" id="CHEBI:29105"/>
    </ligand>
</feature>
<feature type="binding site" evidence="1">
    <location>
        <position position="239"/>
    </location>
    <ligand>
        <name>ATP</name>
        <dbReference type="ChEBI" id="CHEBI:30616"/>
    </ligand>
</feature>
<organism>
    <name type="scientific">Francisella tularensis subsp. tularensis (strain WY96-3418)</name>
    <dbReference type="NCBI Taxonomy" id="418136"/>
    <lineage>
        <taxon>Bacteria</taxon>
        <taxon>Pseudomonadati</taxon>
        <taxon>Pseudomonadota</taxon>
        <taxon>Gammaproteobacteria</taxon>
        <taxon>Thiotrichales</taxon>
        <taxon>Francisellaceae</taxon>
        <taxon>Francisella</taxon>
    </lineage>
</organism>
<dbReference type="EC" id="6.1.1.17" evidence="1"/>
<dbReference type="EMBL" id="CP000608">
    <property type="protein sequence ID" value="ABO47448.1"/>
    <property type="molecule type" value="Genomic_DNA"/>
</dbReference>
<dbReference type="RefSeq" id="WP_003017705.1">
    <property type="nucleotide sequence ID" value="NC_009257.1"/>
</dbReference>
<dbReference type="SMR" id="A4IZU9"/>
<dbReference type="KEGG" id="ftw:FTW_1778"/>
<dbReference type="HOGENOM" id="CLU_015768_6_0_6"/>
<dbReference type="GO" id="GO:0005829">
    <property type="term" value="C:cytosol"/>
    <property type="evidence" value="ECO:0007669"/>
    <property type="project" value="TreeGrafter"/>
</dbReference>
<dbReference type="GO" id="GO:0005524">
    <property type="term" value="F:ATP binding"/>
    <property type="evidence" value="ECO:0007669"/>
    <property type="project" value="UniProtKB-UniRule"/>
</dbReference>
<dbReference type="GO" id="GO:0004818">
    <property type="term" value="F:glutamate-tRNA ligase activity"/>
    <property type="evidence" value="ECO:0007669"/>
    <property type="project" value="UniProtKB-UniRule"/>
</dbReference>
<dbReference type="GO" id="GO:0000049">
    <property type="term" value="F:tRNA binding"/>
    <property type="evidence" value="ECO:0007669"/>
    <property type="project" value="InterPro"/>
</dbReference>
<dbReference type="GO" id="GO:0008270">
    <property type="term" value="F:zinc ion binding"/>
    <property type="evidence" value="ECO:0007669"/>
    <property type="project" value="UniProtKB-UniRule"/>
</dbReference>
<dbReference type="GO" id="GO:0006424">
    <property type="term" value="P:glutamyl-tRNA aminoacylation"/>
    <property type="evidence" value="ECO:0007669"/>
    <property type="project" value="UniProtKB-UniRule"/>
</dbReference>
<dbReference type="CDD" id="cd00808">
    <property type="entry name" value="GluRS_core"/>
    <property type="match status" value="1"/>
</dbReference>
<dbReference type="FunFam" id="3.40.50.620:FF:000007">
    <property type="entry name" value="Glutamate--tRNA ligase"/>
    <property type="match status" value="1"/>
</dbReference>
<dbReference type="Gene3D" id="1.10.10.350">
    <property type="match status" value="1"/>
</dbReference>
<dbReference type="Gene3D" id="3.40.50.620">
    <property type="entry name" value="HUPs"/>
    <property type="match status" value="1"/>
</dbReference>
<dbReference type="HAMAP" id="MF_00022">
    <property type="entry name" value="Glu_tRNA_synth_type1"/>
    <property type="match status" value="1"/>
</dbReference>
<dbReference type="InterPro" id="IPR045462">
    <property type="entry name" value="aa-tRNA-synth_I_cd-bd"/>
</dbReference>
<dbReference type="InterPro" id="IPR020751">
    <property type="entry name" value="aa-tRNA-synth_I_codon-bd_sub2"/>
</dbReference>
<dbReference type="InterPro" id="IPR001412">
    <property type="entry name" value="aa-tRNA-synth_I_CS"/>
</dbReference>
<dbReference type="InterPro" id="IPR008925">
    <property type="entry name" value="aa_tRNA-synth_I_cd-bd_sf"/>
</dbReference>
<dbReference type="InterPro" id="IPR004527">
    <property type="entry name" value="Glu-tRNA-ligase_bac/mito"/>
</dbReference>
<dbReference type="InterPro" id="IPR000924">
    <property type="entry name" value="Glu/Gln-tRNA-synth"/>
</dbReference>
<dbReference type="InterPro" id="IPR020058">
    <property type="entry name" value="Glu/Gln-tRNA-synth_Ib_cat-dom"/>
</dbReference>
<dbReference type="InterPro" id="IPR049940">
    <property type="entry name" value="GluQ/Sye"/>
</dbReference>
<dbReference type="InterPro" id="IPR033910">
    <property type="entry name" value="GluRS_core"/>
</dbReference>
<dbReference type="InterPro" id="IPR014729">
    <property type="entry name" value="Rossmann-like_a/b/a_fold"/>
</dbReference>
<dbReference type="NCBIfam" id="TIGR00464">
    <property type="entry name" value="gltX_bact"/>
    <property type="match status" value="1"/>
</dbReference>
<dbReference type="PANTHER" id="PTHR43311">
    <property type="entry name" value="GLUTAMATE--TRNA LIGASE"/>
    <property type="match status" value="1"/>
</dbReference>
<dbReference type="PANTHER" id="PTHR43311:SF2">
    <property type="entry name" value="GLUTAMATE--TRNA LIGASE, MITOCHONDRIAL-RELATED"/>
    <property type="match status" value="1"/>
</dbReference>
<dbReference type="Pfam" id="PF19269">
    <property type="entry name" value="Anticodon_2"/>
    <property type="match status" value="1"/>
</dbReference>
<dbReference type="Pfam" id="PF00749">
    <property type="entry name" value="tRNA-synt_1c"/>
    <property type="match status" value="1"/>
</dbReference>
<dbReference type="PRINTS" id="PR00987">
    <property type="entry name" value="TRNASYNTHGLU"/>
</dbReference>
<dbReference type="SUPFAM" id="SSF48163">
    <property type="entry name" value="An anticodon-binding domain of class I aminoacyl-tRNA synthetases"/>
    <property type="match status" value="1"/>
</dbReference>
<dbReference type="SUPFAM" id="SSF52374">
    <property type="entry name" value="Nucleotidylyl transferase"/>
    <property type="match status" value="1"/>
</dbReference>
<dbReference type="PROSITE" id="PS00178">
    <property type="entry name" value="AA_TRNA_LIGASE_I"/>
    <property type="match status" value="1"/>
</dbReference>
<accession>A4IZU9</accession>
<name>SYE_FRATW</name>
<gene>
    <name evidence="1" type="primary">gltX</name>
    <name type="ordered locus">FTW_1778</name>
</gene>
<comment type="function">
    <text evidence="1">Catalyzes the attachment of glutamate to tRNA(Glu) in a two-step reaction: glutamate is first activated by ATP to form Glu-AMP and then transferred to the acceptor end of tRNA(Glu).</text>
</comment>
<comment type="catalytic activity">
    <reaction evidence="1">
        <text>tRNA(Glu) + L-glutamate + ATP = L-glutamyl-tRNA(Glu) + AMP + diphosphate</text>
        <dbReference type="Rhea" id="RHEA:23540"/>
        <dbReference type="Rhea" id="RHEA-COMP:9663"/>
        <dbReference type="Rhea" id="RHEA-COMP:9680"/>
        <dbReference type="ChEBI" id="CHEBI:29985"/>
        <dbReference type="ChEBI" id="CHEBI:30616"/>
        <dbReference type="ChEBI" id="CHEBI:33019"/>
        <dbReference type="ChEBI" id="CHEBI:78442"/>
        <dbReference type="ChEBI" id="CHEBI:78520"/>
        <dbReference type="ChEBI" id="CHEBI:456215"/>
        <dbReference type="EC" id="6.1.1.17"/>
    </reaction>
</comment>
<comment type="cofactor">
    <cofactor evidence="1">
        <name>Zn(2+)</name>
        <dbReference type="ChEBI" id="CHEBI:29105"/>
    </cofactor>
    <text evidence="1">Binds 1 zinc ion per subunit.</text>
</comment>
<comment type="subunit">
    <text evidence="1">Monomer.</text>
</comment>
<comment type="subcellular location">
    <subcellularLocation>
        <location evidence="1">Cytoplasm</location>
    </subcellularLocation>
</comment>
<comment type="similarity">
    <text evidence="1">Belongs to the class-I aminoacyl-tRNA synthetase family. Glutamate--tRNA ligase type 1 subfamily.</text>
</comment>
<protein>
    <recommendedName>
        <fullName evidence="1">Glutamate--tRNA ligase</fullName>
        <ecNumber evidence="1">6.1.1.17</ecNumber>
    </recommendedName>
    <alternativeName>
        <fullName evidence="1">Glutamyl-tRNA synthetase</fullName>
        <shortName evidence="1">GluRS</shortName>
    </alternativeName>
</protein>
<evidence type="ECO:0000255" key="1">
    <source>
        <dbReference type="HAMAP-Rule" id="MF_00022"/>
    </source>
</evidence>
<reference key="1">
    <citation type="journal article" date="2007" name="PLoS ONE">
        <title>Complete genomic characterization of a pathogenic A.II strain of Francisella tularensis subspecies tularensis.</title>
        <authorList>
            <person name="Beckstrom-Sternberg S.M."/>
            <person name="Auerbach R.K."/>
            <person name="Godbole S."/>
            <person name="Pearson J.V."/>
            <person name="Beckstrom-Sternberg J.S."/>
            <person name="Deng Z."/>
            <person name="Munk C."/>
            <person name="Kubota K."/>
            <person name="Zhou Y."/>
            <person name="Bruce D."/>
            <person name="Noronha J."/>
            <person name="Scheuermann R.H."/>
            <person name="Wang A."/>
            <person name="Wei X."/>
            <person name="Wang J."/>
            <person name="Hao J."/>
            <person name="Wagner D.M."/>
            <person name="Brettin T.S."/>
            <person name="Brown N."/>
            <person name="Gilna P."/>
            <person name="Keim P.S."/>
        </authorList>
    </citation>
    <scope>NUCLEOTIDE SEQUENCE [LARGE SCALE GENOMIC DNA]</scope>
    <source>
        <strain>WY96-3418</strain>
    </source>
</reference>
<proteinExistence type="inferred from homology"/>
<sequence>MITTRFAPSPTGFLHVGGVRTALFSWLYAKNNNGKFILRIEDTDLERSTQEAVDAILDGMSWLGLKNDGEIYYQTKRFDRYKEVIQELIADGKAYYCSCSKERLEELREYQQANNLKTGYDGKCRDANYIPQQGESYVVRFKNPQDGVVSWDDAVKGRISISNHELDDMIIQRADGSPTYNFCVVVDDIDMAITHIIRGDDHVNNTPKQINIYKALNANVPVFAHVPMILGPDGAKLSKRHGAVNVMQYREDGYLPQAILNYLVRLGWSHGDQEIFSIEEMIKAFNLEHINASPSRFDFEKLKWLNKHYIKESKFDDIQTEVEYHFAKTGLDISNGPDLKELVAVMAEKVDTLVELAEKSSYFYSDDISYDENAVKKHIKASTGEIFVKLLENFEALDAQQWQDPDVLHNIVSTTAEQCQVGMGKVGMPLRVAITGSGQSPDIGITLKLLGKNKVVARLTKALEELCK</sequence>